<feature type="chain" id="PRO_0000190588" description="4-hydroxy-3-methylbut-2-en-1-yl diphosphate synthase (flavodoxin)">
    <location>
        <begin position="1"/>
        <end position="359"/>
    </location>
</feature>
<feature type="binding site" evidence="1">
    <location>
        <position position="264"/>
    </location>
    <ligand>
        <name>[4Fe-4S] cluster</name>
        <dbReference type="ChEBI" id="CHEBI:49883"/>
    </ligand>
</feature>
<feature type="binding site" evidence="1">
    <location>
        <position position="267"/>
    </location>
    <ligand>
        <name>[4Fe-4S] cluster</name>
        <dbReference type="ChEBI" id="CHEBI:49883"/>
    </ligand>
</feature>
<feature type="binding site" evidence="1">
    <location>
        <position position="299"/>
    </location>
    <ligand>
        <name>[4Fe-4S] cluster</name>
        <dbReference type="ChEBI" id="CHEBI:49883"/>
    </ligand>
</feature>
<feature type="binding site" evidence="1">
    <location>
        <position position="306"/>
    </location>
    <ligand>
        <name>[4Fe-4S] cluster</name>
        <dbReference type="ChEBI" id="CHEBI:49883"/>
    </ligand>
</feature>
<reference key="1">
    <citation type="journal article" date="1999" name="Nature">
        <title>Genomic sequence comparison of two unrelated isolates of the human gastric pathogen Helicobacter pylori.</title>
        <authorList>
            <person name="Alm R.A."/>
            <person name="Ling L.-S.L."/>
            <person name="Moir D.T."/>
            <person name="King B.L."/>
            <person name="Brown E.D."/>
            <person name="Doig P.C."/>
            <person name="Smith D.R."/>
            <person name="Noonan B."/>
            <person name="Guild B.C."/>
            <person name="deJonge B.L."/>
            <person name="Carmel G."/>
            <person name="Tummino P.J."/>
            <person name="Caruso A."/>
            <person name="Uria-Nickelsen M."/>
            <person name="Mills D.M."/>
            <person name="Ives C."/>
            <person name="Gibson R."/>
            <person name="Merberg D."/>
            <person name="Mills S.D."/>
            <person name="Jiang Q."/>
            <person name="Taylor D.E."/>
            <person name="Vovis G.F."/>
            <person name="Trust T.J."/>
        </authorList>
    </citation>
    <scope>NUCLEOTIDE SEQUENCE [LARGE SCALE GENOMIC DNA]</scope>
    <source>
        <strain>J99 / ATCC 700824</strain>
    </source>
</reference>
<protein>
    <recommendedName>
        <fullName evidence="1">4-hydroxy-3-methylbut-2-en-1-yl diphosphate synthase (flavodoxin)</fullName>
        <ecNumber evidence="1">1.17.7.3</ecNumber>
    </recommendedName>
    <alternativeName>
        <fullName evidence="1">1-hydroxy-2-methyl-2-(E)-butenyl 4-diphosphate synthase</fullName>
    </alternativeName>
</protein>
<name>ISPG_HELPJ</name>
<proteinExistence type="inferred from homology"/>
<dbReference type="EC" id="1.17.7.3" evidence="1"/>
<dbReference type="EMBL" id="AE001439">
    <property type="protein sequence ID" value="AAD06152.1"/>
    <property type="molecule type" value="Genomic_DNA"/>
</dbReference>
<dbReference type="PIR" id="E71914">
    <property type="entry name" value="E71914"/>
</dbReference>
<dbReference type="RefSeq" id="WP_000892444.1">
    <property type="nucleotide sequence ID" value="NC_000921.1"/>
</dbReference>
<dbReference type="SMR" id="Q9ZLL0"/>
<dbReference type="KEGG" id="hpj:jhp_0569"/>
<dbReference type="eggNOG" id="COG0821">
    <property type="taxonomic scope" value="Bacteria"/>
</dbReference>
<dbReference type="UniPathway" id="UPA00056">
    <property type="reaction ID" value="UER00096"/>
</dbReference>
<dbReference type="Proteomes" id="UP000000804">
    <property type="component" value="Chromosome"/>
</dbReference>
<dbReference type="GO" id="GO:0051539">
    <property type="term" value="F:4 iron, 4 sulfur cluster binding"/>
    <property type="evidence" value="ECO:0007669"/>
    <property type="project" value="UniProtKB-UniRule"/>
</dbReference>
<dbReference type="GO" id="GO:0046429">
    <property type="term" value="F:4-hydroxy-3-methylbut-2-en-1-yl diphosphate synthase activity (ferredoxin)"/>
    <property type="evidence" value="ECO:0007669"/>
    <property type="project" value="UniProtKB-UniRule"/>
</dbReference>
<dbReference type="GO" id="GO:0141197">
    <property type="term" value="F:4-hydroxy-3-methylbut-2-enyl-diphosphate synthase activity (flavodoxin)"/>
    <property type="evidence" value="ECO:0007669"/>
    <property type="project" value="UniProtKB-EC"/>
</dbReference>
<dbReference type="GO" id="GO:0005506">
    <property type="term" value="F:iron ion binding"/>
    <property type="evidence" value="ECO:0007669"/>
    <property type="project" value="InterPro"/>
</dbReference>
<dbReference type="GO" id="GO:0019288">
    <property type="term" value="P:isopentenyl diphosphate biosynthetic process, methylerythritol 4-phosphate pathway"/>
    <property type="evidence" value="ECO:0007669"/>
    <property type="project" value="UniProtKB-UniRule"/>
</dbReference>
<dbReference type="GO" id="GO:0016114">
    <property type="term" value="P:terpenoid biosynthetic process"/>
    <property type="evidence" value="ECO:0007669"/>
    <property type="project" value="InterPro"/>
</dbReference>
<dbReference type="FunFam" id="3.20.20.20:FF:000001">
    <property type="entry name" value="4-hydroxy-3-methylbut-2-en-1-yl diphosphate synthase (flavodoxin)"/>
    <property type="match status" value="1"/>
</dbReference>
<dbReference type="FunFam" id="3.30.413.10:FF:000015">
    <property type="entry name" value="4-hydroxy-3-methylbut-2-en-1-yl diphosphate synthase (flavodoxin)"/>
    <property type="match status" value="1"/>
</dbReference>
<dbReference type="Gene3D" id="3.20.20.20">
    <property type="entry name" value="Dihydropteroate synthase-like"/>
    <property type="match status" value="1"/>
</dbReference>
<dbReference type="Gene3D" id="3.30.413.10">
    <property type="entry name" value="Sulfite Reductase Hemoprotein, domain 1"/>
    <property type="match status" value="1"/>
</dbReference>
<dbReference type="HAMAP" id="MF_00159">
    <property type="entry name" value="IspG"/>
    <property type="match status" value="1"/>
</dbReference>
<dbReference type="InterPro" id="IPR011005">
    <property type="entry name" value="Dihydropteroate_synth-like_sf"/>
</dbReference>
<dbReference type="InterPro" id="IPR036849">
    <property type="entry name" value="Enolase-like_C_sf"/>
</dbReference>
<dbReference type="InterPro" id="IPR016425">
    <property type="entry name" value="IspG_bac"/>
</dbReference>
<dbReference type="InterPro" id="IPR004588">
    <property type="entry name" value="IspG_bac-typ"/>
</dbReference>
<dbReference type="InterPro" id="IPR045854">
    <property type="entry name" value="NO2/SO3_Rdtase_4Fe4S_sf"/>
</dbReference>
<dbReference type="NCBIfam" id="TIGR00612">
    <property type="entry name" value="ispG_gcpE"/>
    <property type="match status" value="1"/>
</dbReference>
<dbReference type="NCBIfam" id="NF001540">
    <property type="entry name" value="PRK00366.1"/>
    <property type="match status" value="1"/>
</dbReference>
<dbReference type="PANTHER" id="PTHR30454">
    <property type="entry name" value="4-HYDROXY-3-METHYLBUT-2-EN-1-YL DIPHOSPHATE SYNTHASE"/>
    <property type="match status" value="1"/>
</dbReference>
<dbReference type="PANTHER" id="PTHR30454:SF0">
    <property type="entry name" value="4-HYDROXY-3-METHYLBUT-2-EN-1-YL DIPHOSPHATE SYNTHASE (FERREDOXIN), CHLOROPLASTIC"/>
    <property type="match status" value="1"/>
</dbReference>
<dbReference type="Pfam" id="PF04551">
    <property type="entry name" value="GcpE"/>
    <property type="match status" value="1"/>
</dbReference>
<dbReference type="PIRSF" id="PIRSF004640">
    <property type="entry name" value="IspG"/>
    <property type="match status" value="1"/>
</dbReference>
<dbReference type="SUPFAM" id="SSF51604">
    <property type="entry name" value="Enolase C-terminal domain-like"/>
    <property type="match status" value="1"/>
</dbReference>
<dbReference type="SUPFAM" id="SSF56014">
    <property type="entry name" value="Nitrite and sulphite reductase 4Fe-4S domain-like"/>
    <property type="match status" value="1"/>
</dbReference>
<evidence type="ECO:0000255" key="1">
    <source>
        <dbReference type="HAMAP-Rule" id="MF_00159"/>
    </source>
</evidence>
<comment type="function">
    <text evidence="1">Converts 2C-methyl-D-erythritol 2,4-cyclodiphosphate (ME-2,4cPP) into 1-hydroxy-2-methyl-2-(E)-butenyl 4-diphosphate.</text>
</comment>
<comment type="catalytic activity">
    <reaction evidence="1">
        <text>(2E)-4-hydroxy-3-methylbut-2-enyl diphosphate + oxidized [flavodoxin] + H2O + 2 H(+) = 2-C-methyl-D-erythritol 2,4-cyclic diphosphate + reduced [flavodoxin]</text>
        <dbReference type="Rhea" id="RHEA:43604"/>
        <dbReference type="Rhea" id="RHEA-COMP:10622"/>
        <dbReference type="Rhea" id="RHEA-COMP:10623"/>
        <dbReference type="ChEBI" id="CHEBI:15377"/>
        <dbReference type="ChEBI" id="CHEBI:15378"/>
        <dbReference type="ChEBI" id="CHEBI:57618"/>
        <dbReference type="ChEBI" id="CHEBI:58210"/>
        <dbReference type="ChEBI" id="CHEBI:58483"/>
        <dbReference type="ChEBI" id="CHEBI:128753"/>
        <dbReference type="EC" id="1.17.7.3"/>
    </reaction>
</comment>
<comment type="cofactor">
    <cofactor evidence="1">
        <name>[4Fe-4S] cluster</name>
        <dbReference type="ChEBI" id="CHEBI:49883"/>
    </cofactor>
    <text evidence="1">Binds 1 [4Fe-4S] cluster.</text>
</comment>
<comment type="pathway">
    <text evidence="1">Isoprenoid biosynthesis; isopentenyl diphosphate biosynthesis via DXP pathway; isopentenyl diphosphate from 1-deoxy-D-xylulose 5-phosphate: step 5/6.</text>
</comment>
<comment type="similarity">
    <text evidence="1">Belongs to the IspG family.</text>
</comment>
<gene>
    <name evidence="1" type="primary">ispG</name>
    <name type="ordered locus">jhp_0569</name>
</gene>
<keyword id="KW-0004">4Fe-4S</keyword>
<keyword id="KW-0408">Iron</keyword>
<keyword id="KW-0411">Iron-sulfur</keyword>
<keyword id="KW-0414">Isoprene biosynthesis</keyword>
<keyword id="KW-0479">Metal-binding</keyword>
<keyword id="KW-0560">Oxidoreductase</keyword>
<sequence length="359" mass="39260">MLENRVKTKQIFIGGVAIGGDAPISTQSMTFSKTADIESTKNQIDRFKLAGADLVRVAVSNEKDALALKELKKVSPLPLIADIHFHYKFALIAAQSVDAIRINPGNIGSKDKIKAVVDACKEKNIPIRIGVNAGSLEKQFDQKYGPTPKGMVESALYNAKLLEDLDFTDFKISLKASDVVRTIEAYRMLRPLVIYPFHLGVTEAGNLFSSSIKSAMALGGLLMEGIGDTMRVSITGELENEIKVARAILRHSGRLKEGINWISCPTCGRIEANLVDMASKVEKRLSHIKTPLDISVMGCVVNALGEAKHADMAIAFGNRSGLIIKEGKVIHKLAEKDLFETFVIEVENLAKEREKSLKD</sequence>
<accession>Q9ZLL0</accession>
<organism>
    <name type="scientific">Helicobacter pylori (strain J99 / ATCC 700824)</name>
    <name type="common">Campylobacter pylori J99</name>
    <dbReference type="NCBI Taxonomy" id="85963"/>
    <lineage>
        <taxon>Bacteria</taxon>
        <taxon>Pseudomonadati</taxon>
        <taxon>Campylobacterota</taxon>
        <taxon>Epsilonproteobacteria</taxon>
        <taxon>Campylobacterales</taxon>
        <taxon>Helicobacteraceae</taxon>
        <taxon>Helicobacter</taxon>
    </lineage>
</organism>